<sequence length="738" mass="79817">MARASSSSGPLPPLANVPSSWAQPVGAGEERDEGRRGGLGLLAAVSVPCPDFSRQPWAPASASGPMPFALQRLRATLLRLHREREQLLRARDCARHLQAVVRLLRSGSSAGSLSLQQLHGDLQLCPSRGAALRLGFPGSRETLLLTRPVGLAAQHLEAAIEMQLRSLGRTPASLGLTSQLAELLLALPFYHTLQGHSLNFVPGAARPFPAARVLQLLAAERGCQVADKLAEARGGSGLQEQLRRQCEQERELLPGLLGLVGGVASTDSSGLRLGGPGALWSQYWTLLWAACAKCLDLRVGPWEDPRAMAQELSQALCQAPLPQECEKELLSLCHSLFHQSVICSWDQGFCQALGSALGGQSSPASLSPTSELLQRLFPPLLDSLRQPRPELRLCPPAGPTPVALGLCTLQTTLLWFVGRAQQHLAAWDPGSFLLLLQKDLPPLLSAVEALSSLASEAALTLEVEQQLGLEIHNLTEKMQLLPKESLGLFVQECHKQATQGFKLHMPRGRYWRLRLCPEPPSDPSEYARIVVYSVLEPVLQGLQGLPPEAQAPALGQALTATLGAWLDHILTHGIRFSLQGALQLKQDFGVVREVLEQEQWGLSQELRQTLLSLSIFQQLDGALLCLLQQPLPKNPVHRRPPRCCLCYEVQTTELPTSSLNSLENLAPPLRLGVSPAQNTHLLSTLGGGGRGGGGGGGPGPSPEAYLVGNQQAWLALRLHQHPRWHLPFFSCLRTSPEP</sequence>
<keyword id="KW-0025">Alternative splicing</keyword>
<keyword id="KW-0175">Coiled coil</keyword>
<keyword id="KW-1185">Reference proteome</keyword>
<organism>
    <name type="scientific">Mus musculus</name>
    <name type="common">Mouse</name>
    <dbReference type="NCBI Taxonomy" id="10090"/>
    <lineage>
        <taxon>Eukaryota</taxon>
        <taxon>Metazoa</taxon>
        <taxon>Chordata</taxon>
        <taxon>Craniata</taxon>
        <taxon>Vertebrata</taxon>
        <taxon>Euteleostomi</taxon>
        <taxon>Mammalia</taxon>
        <taxon>Eutheria</taxon>
        <taxon>Euarchontoglires</taxon>
        <taxon>Glires</taxon>
        <taxon>Rodentia</taxon>
        <taxon>Myomorpha</taxon>
        <taxon>Muroidea</taxon>
        <taxon>Muridae</taxon>
        <taxon>Murinae</taxon>
        <taxon>Mus</taxon>
        <taxon>Mus</taxon>
    </lineage>
</organism>
<reference key="1">
    <citation type="journal article" date="2005" name="Science">
        <title>The transcriptional landscape of the mammalian genome.</title>
        <authorList>
            <person name="Carninci P."/>
            <person name="Kasukawa T."/>
            <person name="Katayama S."/>
            <person name="Gough J."/>
            <person name="Frith M.C."/>
            <person name="Maeda N."/>
            <person name="Oyama R."/>
            <person name="Ravasi T."/>
            <person name="Lenhard B."/>
            <person name="Wells C."/>
            <person name="Kodzius R."/>
            <person name="Shimokawa K."/>
            <person name="Bajic V.B."/>
            <person name="Brenner S.E."/>
            <person name="Batalov S."/>
            <person name="Forrest A.R."/>
            <person name="Zavolan M."/>
            <person name="Davis M.J."/>
            <person name="Wilming L.G."/>
            <person name="Aidinis V."/>
            <person name="Allen J.E."/>
            <person name="Ambesi-Impiombato A."/>
            <person name="Apweiler R."/>
            <person name="Aturaliya R.N."/>
            <person name="Bailey T.L."/>
            <person name="Bansal M."/>
            <person name="Baxter L."/>
            <person name="Beisel K.W."/>
            <person name="Bersano T."/>
            <person name="Bono H."/>
            <person name="Chalk A.M."/>
            <person name="Chiu K.P."/>
            <person name="Choudhary V."/>
            <person name="Christoffels A."/>
            <person name="Clutterbuck D.R."/>
            <person name="Crowe M.L."/>
            <person name="Dalla E."/>
            <person name="Dalrymple B.P."/>
            <person name="de Bono B."/>
            <person name="Della Gatta G."/>
            <person name="di Bernardo D."/>
            <person name="Down T."/>
            <person name="Engstrom P."/>
            <person name="Fagiolini M."/>
            <person name="Faulkner G."/>
            <person name="Fletcher C.F."/>
            <person name="Fukushima T."/>
            <person name="Furuno M."/>
            <person name="Futaki S."/>
            <person name="Gariboldi M."/>
            <person name="Georgii-Hemming P."/>
            <person name="Gingeras T.R."/>
            <person name="Gojobori T."/>
            <person name="Green R.E."/>
            <person name="Gustincich S."/>
            <person name="Harbers M."/>
            <person name="Hayashi Y."/>
            <person name="Hensch T.K."/>
            <person name="Hirokawa N."/>
            <person name="Hill D."/>
            <person name="Huminiecki L."/>
            <person name="Iacono M."/>
            <person name="Ikeo K."/>
            <person name="Iwama A."/>
            <person name="Ishikawa T."/>
            <person name="Jakt M."/>
            <person name="Kanapin A."/>
            <person name="Katoh M."/>
            <person name="Kawasawa Y."/>
            <person name="Kelso J."/>
            <person name="Kitamura H."/>
            <person name="Kitano H."/>
            <person name="Kollias G."/>
            <person name="Krishnan S.P."/>
            <person name="Kruger A."/>
            <person name="Kummerfeld S.K."/>
            <person name="Kurochkin I.V."/>
            <person name="Lareau L.F."/>
            <person name="Lazarevic D."/>
            <person name="Lipovich L."/>
            <person name="Liu J."/>
            <person name="Liuni S."/>
            <person name="McWilliam S."/>
            <person name="Madan Babu M."/>
            <person name="Madera M."/>
            <person name="Marchionni L."/>
            <person name="Matsuda H."/>
            <person name="Matsuzawa S."/>
            <person name="Miki H."/>
            <person name="Mignone F."/>
            <person name="Miyake S."/>
            <person name="Morris K."/>
            <person name="Mottagui-Tabar S."/>
            <person name="Mulder N."/>
            <person name="Nakano N."/>
            <person name="Nakauchi H."/>
            <person name="Ng P."/>
            <person name="Nilsson R."/>
            <person name="Nishiguchi S."/>
            <person name="Nishikawa S."/>
            <person name="Nori F."/>
            <person name="Ohara O."/>
            <person name="Okazaki Y."/>
            <person name="Orlando V."/>
            <person name="Pang K.C."/>
            <person name="Pavan W.J."/>
            <person name="Pavesi G."/>
            <person name="Pesole G."/>
            <person name="Petrovsky N."/>
            <person name="Piazza S."/>
            <person name="Reed J."/>
            <person name="Reid J.F."/>
            <person name="Ring B.Z."/>
            <person name="Ringwald M."/>
            <person name="Rost B."/>
            <person name="Ruan Y."/>
            <person name="Salzberg S.L."/>
            <person name="Sandelin A."/>
            <person name="Schneider C."/>
            <person name="Schoenbach C."/>
            <person name="Sekiguchi K."/>
            <person name="Semple C.A."/>
            <person name="Seno S."/>
            <person name="Sessa L."/>
            <person name="Sheng Y."/>
            <person name="Shibata Y."/>
            <person name="Shimada H."/>
            <person name="Shimada K."/>
            <person name="Silva D."/>
            <person name="Sinclair B."/>
            <person name="Sperling S."/>
            <person name="Stupka E."/>
            <person name="Sugiura K."/>
            <person name="Sultana R."/>
            <person name="Takenaka Y."/>
            <person name="Taki K."/>
            <person name="Tammoja K."/>
            <person name="Tan S.L."/>
            <person name="Tang S."/>
            <person name="Taylor M.S."/>
            <person name="Tegner J."/>
            <person name="Teichmann S.A."/>
            <person name="Ueda H.R."/>
            <person name="van Nimwegen E."/>
            <person name="Verardo R."/>
            <person name="Wei C.L."/>
            <person name="Yagi K."/>
            <person name="Yamanishi H."/>
            <person name="Zabarovsky E."/>
            <person name="Zhu S."/>
            <person name="Zimmer A."/>
            <person name="Hide W."/>
            <person name="Bult C."/>
            <person name="Grimmond S.M."/>
            <person name="Teasdale R.D."/>
            <person name="Liu E.T."/>
            <person name="Brusic V."/>
            <person name="Quackenbush J."/>
            <person name="Wahlestedt C."/>
            <person name="Mattick J.S."/>
            <person name="Hume D.A."/>
            <person name="Kai C."/>
            <person name="Sasaki D."/>
            <person name="Tomaru Y."/>
            <person name="Fukuda S."/>
            <person name="Kanamori-Katayama M."/>
            <person name="Suzuki M."/>
            <person name="Aoki J."/>
            <person name="Arakawa T."/>
            <person name="Iida J."/>
            <person name="Imamura K."/>
            <person name="Itoh M."/>
            <person name="Kato T."/>
            <person name="Kawaji H."/>
            <person name="Kawagashira N."/>
            <person name="Kawashima T."/>
            <person name="Kojima M."/>
            <person name="Kondo S."/>
            <person name="Konno H."/>
            <person name="Nakano K."/>
            <person name="Ninomiya N."/>
            <person name="Nishio T."/>
            <person name="Okada M."/>
            <person name="Plessy C."/>
            <person name="Shibata K."/>
            <person name="Shiraki T."/>
            <person name="Suzuki S."/>
            <person name="Tagami M."/>
            <person name="Waki K."/>
            <person name="Watahiki A."/>
            <person name="Okamura-Oho Y."/>
            <person name="Suzuki H."/>
            <person name="Kawai J."/>
            <person name="Hayashizaki Y."/>
        </authorList>
    </citation>
    <scope>NUCLEOTIDE SEQUENCE [LARGE SCALE MRNA] (ISOFORM 2)</scope>
    <source>
        <strain>C57BL/6J</strain>
        <tissue>Hypothalamus</tissue>
    </source>
</reference>
<reference key="2">
    <citation type="journal article" date="2009" name="PLoS Biol.">
        <title>Lineage-specific biology revealed by a finished genome assembly of the mouse.</title>
        <authorList>
            <person name="Church D.M."/>
            <person name="Goodstadt L."/>
            <person name="Hillier L.W."/>
            <person name="Zody M.C."/>
            <person name="Goldstein S."/>
            <person name="She X."/>
            <person name="Bult C.J."/>
            <person name="Agarwala R."/>
            <person name="Cherry J.L."/>
            <person name="DiCuccio M."/>
            <person name="Hlavina W."/>
            <person name="Kapustin Y."/>
            <person name="Meric P."/>
            <person name="Maglott D."/>
            <person name="Birtle Z."/>
            <person name="Marques A.C."/>
            <person name="Graves T."/>
            <person name="Zhou S."/>
            <person name="Teague B."/>
            <person name="Potamousis K."/>
            <person name="Churas C."/>
            <person name="Place M."/>
            <person name="Herschleb J."/>
            <person name="Runnheim R."/>
            <person name="Forrest D."/>
            <person name="Amos-Landgraf J."/>
            <person name="Schwartz D.C."/>
            <person name="Cheng Z."/>
            <person name="Lindblad-Toh K."/>
            <person name="Eichler E.E."/>
            <person name="Ponting C.P."/>
        </authorList>
    </citation>
    <scope>NUCLEOTIDE SEQUENCE [LARGE SCALE GENOMIC DNA]</scope>
    <source>
        <strain>C57BL/6J</strain>
    </source>
</reference>
<accession>Q8CAI1</accession>
<evidence type="ECO:0000255" key="1"/>
<evidence type="ECO:0000256" key="2">
    <source>
        <dbReference type="SAM" id="MobiDB-lite"/>
    </source>
</evidence>
<evidence type="ECO:0000303" key="3">
    <source>
    </source>
</evidence>
<protein>
    <recommendedName>
        <fullName>Coiled-coil domain-containing protein 142</fullName>
    </recommendedName>
</protein>
<name>CC142_MOUSE</name>
<feature type="chain" id="PRO_0000311261" description="Coiled-coil domain-containing protein 142">
    <location>
        <begin position="1"/>
        <end position="738"/>
    </location>
</feature>
<feature type="region of interest" description="Disordered" evidence="2">
    <location>
        <begin position="1"/>
        <end position="34"/>
    </location>
</feature>
<feature type="region of interest" description="Disordered" evidence="2">
    <location>
        <begin position="682"/>
        <end position="704"/>
    </location>
</feature>
<feature type="coiled-coil region" evidence="1">
    <location>
        <begin position="69"/>
        <end position="92"/>
    </location>
</feature>
<feature type="compositionally biased region" description="Gly residues" evidence="2">
    <location>
        <begin position="685"/>
        <end position="698"/>
    </location>
</feature>
<feature type="splice variant" id="VSP_029500" description="In isoform 2." evidence="3">
    <original>APLPQECEKELLS</original>
    <variation>GKRGVRAGIWRLW</variation>
    <location>
        <begin position="319"/>
        <end position="331"/>
    </location>
</feature>
<feature type="splice variant" id="VSP_029501" description="In isoform 2." evidence="3">
    <location>
        <begin position="332"/>
        <end position="738"/>
    </location>
</feature>
<comment type="alternative products">
    <event type="alternative splicing"/>
    <isoform>
        <id>Q8CAI1-1</id>
        <name>1</name>
        <sequence type="displayed"/>
    </isoform>
    <isoform>
        <id>Q8CAI1-2</id>
        <name>2</name>
        <sequence type="described" ref="VSP_029500 VSP_029501"/>
    </isoform>
</comment>
<gene>
    <name type="primary">Ccdc142</name>
</gene>
<proteinExistence type="evidence at transcript level"/>
<dbReference type="EMBL" id="AK038734">
    <property type="protein sequence ID" value="BAC30114.1"/>
    <property type="molecule type" value="mRNA"/>
</dbReference>
<dbReference type="EMBL" id="AC104324">
    <property type="status" value="NOT_ANNOTATED_CDS"/>
    <property type="molecule type" value="Genomic_DNA"/>
</dbReference>
<dbReference type="CCDS" id="CCDS39527.1">
    <molecule id="Q8CAI1-1"/>
</dbReference>
<dbReference type="RefSeq" id="NP_001074735.1">
    <molecule id="Q8CAI1-1"/>
    <property type="nucleotide sequence ID" value="NM_001081266.1"/>
</dbReference>
<dbReference type="FunCoup" id="Q8CAI1">
    <property type="interactions" value="1"/>
</dbReference>
<dbReference type="STRING" id="10090.ENSMUSP00000098812"/>
<dbReference type="GlyGen" id="Q8CAI1">
    <property type="glycosylation" value="1 site"/>
</dbReference>
<dbReference type="iPTMnet" id="Q8CAI1"/>
<dbReference type="PhosphoSitePlus" id="Q8CAI1"/>
<dbReference type="PaxDb" id="10090-ENSMUSP00000098812"/>
<dbReference type="ProteomicsDB" id="265286">
    <molecule id="Q8CAI1-1"/>
</dbReference>
<dbReference type="ProteomicsDB" id="265287">
    <molecule id="Q8CAI1-2"/>
</dbReference>
<dbReference type="Ensembl" id="ENSMUST00000101254.9">
    <molecule id="Q8CAI1-1"/>
    <property type="protein sequence ID" value="ENSMUSP00000098812.4"/>
    <property type="gene ID" value="ENSMUSG00000107499.2"/>
</dbReference>
<dbReference type="GeneID" id="243510"/>
<dbReference type="KEGG" id="mmu:243510"/>
<dbReference type="UCSC" id="uc009cmj.1">
    <molecule id="Q8CAI1-1"/>
    <property type="organism name" value="mouse"/>
</dbReference>
<dbReference type="AGR" id="MGI:3045292"/>
<dbReference type="CTD" id="84865"/>
<dbReference type="MGI" id="MGI:3045292">
    <property type="gene designation" value="Ccdc142"/>
</dbReference>
<dbReference type="VEuPathDB" id="HostDB:ENSMUSG00000107499"/>
<dbReference type="eggNOG" id="ENOG502QUBZ">
    <property type="taxonomic scope" value="Eukaryota"/>
</dbReference>
<dbReference type="GeneTree" id="ENSGT00390000009871"/>
<dbReference type="HOGENOM" id="CLU_022376_0_0_1"/>
<dbReference type="InParanoid" id="Q8CAI1"/>
<dbReference type="OMA" id="CCCVCNE"/>
<dbReference type="OrthoDB" id="6579237at2759"/>
<dbReference type="PhylomeDB" id="Q8CAI1"/>
<dbReference type="TreeFam" id="TF328445"/>
<dbReference type="BioGRID-ORCS" id="243510">
    <property type="hits" value="1 hit in 76 CRISPR screens"/>
</dbReference>
<dbReference type="ChiTaRS" id="Ccdc142">
    <property type="organism name" value="mouse"/>
</dbReference>
<dbReference type="PRO" id="PR:Q8CAI1"/>
<dbReference type="Proteomes" id="UP000000589">
    <property type="component" value="Chromosome 6"/>
</dbReference>
<dbReference type="RNAct" id="Q8CAI1">
    <property type="molecule type" value="protein"/>
</dbReference>
<dbReference type="Bgee" id="ENSMUSG00000107499">
    <property type="expression patterns" value="Expressed in spermatocyte and 60 other cell types or tissues"/>
</dbReference>
<dbReference type="InterPro" id="IPR056901">
    <property type="entry name" value="CC142_N"/>
</dbReference>
<dbReference type="InterPro" id="IPR026700">
    <property type="entry name" value="CCDC142"/>
</dbReference>
<dbReference type="InterPro" id="IPR055350">
    <property type="entry name" value="CCDC142_C"/>
</dbReference>
<dbReference type="PANTHER" id="PTHR21436">
    <property type="entry name" value="COILED-COIL DOMAIN-CONTAINING PROTEIN 142"/>
    <property type="match status" value="1"/>
</dbReference>
<dbReference type="PANTHER" id="PTHR21436:SF2">
    <property type="entry name" value="COILED-COIL DOMAIN-CONTAINING PROTEIN 142"/>
    <property type="match status" value="1"/>
</dbReference>
<dbReference type="Pfam" id="PF25081">
    <property type="entry name" value="CC142_N"/>
    <property type="match status" value="1"/>
</dbReference>
<dbReference type="Pfam" id="PF14923">
    <property type="entry name" value="CCDC142"/>
    <property type="match status" value="1"/>
</dbReference>